<gene>
    <name type="primary">ADAMTS10</name>
</gene>
<evidence type="ECO:0000250" key="1"/>
<evidence type="ECO:0000255" key="2"/>
<evidence type="ECO:0000255" key="3">
    <source>
        <dbReference type="PROSITE-ProRule" id="PRU00210"/>
    </source>
</evidence>
<evidence type="ECO:0000255" key="4">
    <source>
        <dbReference type="PROSITE-ProRule" id="PRU00233"/>
    </source>
</evidence>
<evidence type="ECO:0000255" key="5">
    <source>
        <dbReference type="PROSITE-ProRule" id="PRU00276"/>
    </source>
</evidence>
<evidence type="ECO:0000255" key="6">
    <source>
        <dbReference type="PROSITE-ProRule" id="PRU10095"/>
    </source>
</evidence>
<evidence type="ECO:0000256" key="7">
    <source>
        <dbReference type="SAM" id="MobiDB-lite"/>
    </source>
</evidence>
<evidence type="ECO:0000269" key="8">
    <source>
    </source>
</evidence>
<evidence type="ECO:0000269" key="9">
    <source>
    </source>
</evidence>
<evidence type="ECO:0000269" key="10">
    <source>
    </source>
</evidence>
<evidence type="ECO:0000269" key="11">
    <source>
    </source>
</evidence>
<evidence type="ECO:0000305" key="12"/>
<proteinExistence type="evidence at protein level"/>
<accession>Q9H324</accession>
<accession>M0QZE4</accession>
<comment type="function">
    <text evidence="11">Metalloprotease that participate in microfibrils assembly. Microfibrils are extracellular matrix components occurring independently or along with elastin in the formation of elastic tissues.</text>
</comment>
<comment type="cofactor">
    <cofactor evidence="1">
        <name>Zn(2+)</name>
        <dbReference type="ChEBI" id="CHEBI:29105"/>
    </cofactor>
    <text evidence="1">Binds 1 zinc ion per subunit.</text>
</comment>
<comment type="subunit">
    <text evidence="11">Interacts with FBN1; this interaction promotes microfibrils assembly.</text>
</comment>
<comment type="interaction">
    <interactant intactId="EBI-7096115">
        <id>Q9H324</id>
    </interactant>
    <interactant intactId="EBI-642911">
        <id>P28301</id>
        <label>Lox</label>
    </interactant>
    <organismsDiffer>true</organismsDiffer>
    <experiments>3</experiments>
</comment>
<comment type="subcellular location">
    <subcellularLocation>
        <location evidence="11">Secreted</location>
        <location evidence="11">Extracellular space</location>
        <location evidence="11">Extracellular matrix</location>
    </subcellularLocation>
</comment>
<comment type="alternative products">
    <event type="alternative splicing"/>
    <isoform>
        <id>Q9H324-1</id>
        <name>1</name>
        <sequence type="displayed"/>
    </isoform>
    <isoform>
        <id>Q9H324-2</id>
        <name>2</name>
        <sequence type="described" ref="VSP_054707"/>
    </isoform>
</comment>
<comment type="tissue specificity">
    <text evidence="8">Widely expressed in adult tissues.</text>
</comment>
<comment type="domain">
    <text evidence="1">The spacer domain and the TSP type-1 domains are important for a tight interaction with the extracellular matrix.</text>
</comment>
<comment type="PTM">
    <text evidence="1">Glycosylated. Can be O-fucosylated by POFUT2 on a serine or a threonine residue found within the consensus sequence C1-X(2)-(S/T)-C2-G of the TSP type-1 repeat domains where C1 and C2 are the first and second cysteine residue of the repeat, respectively. Fucosylated repeats can then be further glycosylated by the addition of a beta-1,3-glucose residue by the glucosyltransferase, B3GALTL. Fucosylation mediates the efficient secretion of ADAMTS family members. Can also be C-glycosylated with one or two mannose molecules on tryptophan residues within the consensus sequence W-X-X-W of the TPRs, and N-glycosylated. These other glycosylations can also facilitate secretion (By similarity).</text>
</comment>
<comment type="disease" evidence="9 10">
    <disease id="DI-01143">
        <name>Weill-Marchesani syndrome 1</name>
        <acronym>WMS1</acronym>
        <description>A rare connective tissue disorder characterized by short stature, brachydactyly, joint stiffness, and eye abnormalities including microspherophakia, ectopia lentis, severe myopia and glaucoma.</description>
        <dbReference type="MIM" id="277600"/>
    </disease>
    <text>The disease is caused by variants affecting the gene represented in this entry.</text>
</comment>
<dbReference type="EC" id="3.4.24.-"/>
<dbReference type="EMBL" id="AC092315">
    <property type="status" value="NOT_ANNOTATED_CDS"/>
    <property type="molecule type" value="Genomic_DNA"/>
</dbReference>
<dbReference type="EMBL" id="AC130469">
    <property type="status" value="NOT_ANNOTATED_CDS"/>
    <property type="molecule type" value="Genomic_DNA"/>
</dbReference>
<dbReference type="EMBL" id="AF163762">
    <property type="protein sequence ID" value="AAG35563.1"/>
    <property type="molecule type" value="mRNA"/>
</dbReference>
<dbReference type="CCDS" id="CCDS12206.1">
    <molecule id="Q9H324-1"/>
</dbReference>
<dbReference type="CCDS" id="CCDS62529.1">
    <molecule id="Q9H324-2"/>
</dbReference>
<dbReference type="RefSeq" id="NP_001269281.1">
    <molecule id="Q9H324-2"/>
    <property type="nucleotide sequence ID" value="NM_001282352.2"/>
</dbReference>
<dbReference type="RefSeq" id="NP_112219.3">
    <property type="nucleotide sequence ID" value="NM_030957.3"/>
</dbReference>
<dbReference type="SMR" id="Q9H324"/>
<dbReference type="BioGRID" id="123586">
    <property type="interactions" value="13"/>
</dbReference>
<dbReference type="FunCoup" id="Q9H324">
    <property type="interactions" value="45"/>
</dbReference>
<dbReference type="IntAct" id="Q9H324">
    <property type="interactions" value="12"/>
</dbReference>
<dbReference type="MINT" id="Q9H324"/>
<dbReference type="STRING" id="9606.ENSP00000471851"/>
<dbReference type="MEROPS" id="M12.235"/>
<dbReference type="GlyCosmos" id="Q9H324">
    <property type="glycosylation" value="6 sites, No reported glycans"/>
</dbReference>
<dbReference type="GlyGen" id="Q9H324">
    <property type="glycosylation" value="8 sites, 2 N-linked glycans (2 sites), 1 O-linked glycan (1 site)"/>
</dbReference>
<dbReference type="iPTMnet" id="Q9H324"/>
<dbReference type="PhosphoSitePlus" id="Q9H324"/>
<dbReference type="BioMuta" id="ADAMTS10"/>
<dbReference type="DMDM" id="148887344"/>
<dbReference type="MassIVE" id="Q9H324"/>
<dbReference type="PaxDb" id="9606-ENSP00000270328"/>
<dbReference type="PeptideAtlas" id="Q9H324"/>
<dbReference type="Antibodypedia" id="51079">
    <property type="antibodies" value="151 antibodies from 29 providers"/>
</dbReference>
<dbReference type="DNASU" id="81794"/>
<dbReference type="Ensembl" id="ENST00000595838.5">
    <molecule id="Q9H324-2"/>
    <property type="protein sequence ID" value="ENSP00000470501.1"/>
    <property type="gene ID" value="ENSG00000142303.14"/>
</dbReference>
<dbReference type="GeneID" id="81794"/>
<dbReference type="KEGG" id="hsa:81794"/>
<dbReference type="UCSC" id="uc002mki.3">
    <molecule id="Q9H324-1"/>
    <property type="organism name" value="human"/>
</dbReference>
<dbReference type="AGR" id="HGNC:13201"/>
<dbReference type="CTD" id="81794"/>
<dbReference type="DisGeNET" id="81794"/>
<dbReference type="GeneCards" id="ADAMTS10"/>
<dbReference type="GeneReviews" id="ADAMTS10"/>
<dbReference type="HGNC" id="HGNC:13201">
    <property type="gene designation" value="ADAMTS10"/>
</dbReference>
<dbReference type="HPA" id="ENSG00000142303">
    <property type="expression patterns" value="Low tissue specificity"/>
</dbReference>
<dbReference type="MalaCards" id="ADAMTS10"/>
<dbReference type="MIM" id="277600">
    <property type="type" value="phenotype"/>
</dbReference>
<dbReference type="MIM" id="608990">
    <property type="type" value="gene"/>
</dbReference>
<dbReference type="neXtProt" id="NX_Q9H324"/>
<dbReference type="OpenTargets" id="ENSG00000142303"/>
<dbReference type="Orphanet" id="3449">
    <property type="disease" value="Weill-Marchesani syndrome"/>
</dbReference>
<dbReference type="PharmGKB" id="PA24537"/>
<dbReference type="VEuPathDB" id="HostDB:ENSG00000142303"/>
<dbReference type="eggNOG" id="KOG3538">
    <property type="taxonomic scope" value="Eukaryota"/>
</dbReference>
<dbReference type="GeneTree" id="ENSGT00940000158404"/>
<dbReference type="HOGENOM" id="CLU_554988_0_0_1"/>
<dbReference type="InParanoid" id="Q9H324"/>
<dbReference type="OrthoDB" id="10035764at2759"/>
<dbReference type="PAN-GO" id="Q9H324">
    <property type="GO annotations" value="3 GO annotations based on evolutionary models"/>
</dbReference>
<dbReference type="PhylomeDB" id="Q9H324"/>
<dbReference type="TreeFam" id="TF313537"/>
<dbReference type="PathwayCommons" id="Q9H324"/>
<dbReference type="Reactome" id="R-HSA-5083635">
    <property type="pathway name" value="Defective B3GALTL causes PpS"/>
</dbReference>
<dbReference type="Reactome" id="R-HSA-5173214">
    <property type="pathway name" value="O-glycosylation of TSR domain-containing proteins"/>
</dbReference>
<dbReference type="SignaLink" id="Q9H324"/>
<dbReference type="BioGRID-ORCS" id="81794">
    <property type="hits" value="19 hits in 1146 CRISPR screens"/>
</dbReference>
<dbReference type="ChiTaRS" id="ADAMTS10">
    <property type="organism name" value="human"/>
</dbReference>
<dbReference type="GeneWiki" id="ADAMTS10"/>
<dbReference type="GenomeRNAi" id="81794"/>
<dbReference type="Pharos" id="Q9H324">
    <property type="development level" value="Tbio"/>
</dbReference>
<dbReference type="PRO" id="PR:Q9H324"/>
<dbReference type="Proteomes" id="UP000005640">
    <property type="component" value="Chromosome 19"/>
</dbReference>
<dbReference type="RNAct" id="Q9H324">
    <property type="molecule type" value="protein"/>
</dbReference>
<dbReference type="Bgee" id="ENSG00000142303">
    <property type="expression patterns" value="Expressed in descending thoracic aorta and 179 other cell types or tissues"/>
</dbReference>
<dbReference type="ExpressionAtlas" id="Q9H324">
    <property type="expression patterns" value="baseline and differential"/>
</dbReference>
<dbReference type="GO" id="GO:0062023">
    <property type="term" value="C:collagen-containing extracellular matrix"/>
    <property type="evidence" value="ECO:0000314"/>
    <property type="project" value="UniProtKB"/>
</dbReference>
<dbReference type="GO" id="GO:0031012">
    <property type="term" value="C:extracellular matrix"/>
    <property type="evidence" value="ECO:0000318"/>
    <property type="project" value="GO_Central"/>
</dbReference>
<dbReference type="GO" id="GO:0005576">
    <property type="term" value="C:extracellular region"/>
    <property type="evidence" value="ECO:0007669"/>
    <property type="project" value="UniProtKB-KW"/>
</dbReference>
<dbReference type="GO" id="GO:0001527">
    <property type="term" value="C:microfibril"/>
    <property type="evidence" value="ECO:0000314"/>
    <property type="project" value="UniProtKB"/>
</dbReference>
<dbReference type="GO" id="GO:0046872">
    <property type="term" value="F:metal ion binding"/>
    <property type="evidence" value="ECO:0007669"/>
    <property type="project" value="UniProtKB-KW"/>
</dbReference>
<dbReference type="GO" id="GO:0004222">
    <property type="term" value="F:metalloendopeptidase activity"/>
    <property type="evidence" value="ECO:0000318"/>
    <property type="project" value="GO_Central"/>
</dbReference>
<dbReference type="GO" id="GO:0030198">
    <property type="term" value="P:extracellular matrix organization"/>
    <property type="evidence" value="ECO:0000318"/>
    <property type="project" value="GO_Central"/>
</dbReference>
<dbReference type="GO" id="GO:0006508">
    <property type="term" value="P:proteolysis"/>
    <property type="evidence" value="ECO:0000318"/>
    <property type="project" value="GO_Central"/>
</dbReference>
<dbReference type="CDD" id="cd04273">
    <property type="entry name" value="ZnMc_ADAMTS_like"/>
    <property type="match status" value="1"/>
</dbReference>
<dbReference type="FunFam" id="2.20.100.10:FF:000006">
    <property type="entry name" value="A disintegrin and metalloproteinase with thrombospondin motifs 1"/>
    <property type="match status" value="1"/>
</dbReference>
<dbReference type="FunFam" id="2.60.120.830:FF:000001">
    <property type="entry name" value="A disintegrin and metalloproteinase with thrombospondin motifs 1"/>
    <property type="match status" value="1"/>
</dbReference>
<dbReference type="FunFam" id="3.40.390.10:FF:000001">
    <property type="entry name" value="A disintegrin and metalloproteinase with thrombospondin motifs 1"/>
    <property type="match status" value="1"/>
</dbReference>
<dbReference type="FunFam" id="3.40.1620.60:FF:000002">
    <property type="entry name" value="A disintegrin and metalloproteinase with thrombospondin motifs 10"/>
    <property type="match status" value="1"/>
</dbReference>
<dbReference type="FunFam" id="2.20.100.10:FF:000064">
    <property type="entry name" value="A disintegrin and metalloproteinase with thrombospondin motifs 10 preproprotein"/>
    <property type="match status" value="1"/>
</dbReference>
<dbReference type="FunFam" id="2.20.100.10:FF:000079">
    <property type="entry name" value="ADAM metallopeptidase with thrombospondin type 1 motif 17"/>
    <property type="match status" value="1"/>
</dbReference>
<dbReference type="FunFam" id="2.20.100.10:FF:000005">
    <property type="entry name" value="ADAM metallopeptidase with thrombospondin type 1 motif 9"/>
    <property type="match status" value="2"/>
</dbReference>
<dbReference type="Gene3D" id="2.60.120.830">
    <property type="match status" value="1"/>
</dbReference>
<dbReference type="Gene3D" id="3.40.1620.60">
    <property type="match status" value="1"/>
</dbReference>
<dbReference type="Gene3D" id="3.40.390.10">
    <property type="entry name" value="Collagenase (Catalytic Domain)"/>
    <property type="match status" value="1"/>
</dbReference>
<dbReference type="Gene3D" id="2.20.100.10">
    <property type="entry name" value="Thrombospondin type-1 (TSP1) repeat"/>
    <property type="match status" value="5"/>
</dbReference>
<dbReference type="InterPro" id="IPR013273">
    <property type="entry name" value="ADAMTS/ADAMTS-like"/>
</dbReference>
<dbReference type="InterPro" id="IPR050439">
    <property type="entry name" value="ADAMTS_ADAMTS-like"/>
</dbReference>
<dbReference type="InterPro" id="IPR041645">
    <property type="entry name" value="ADAMTS_CR_2"/>
</dbReference>
<dbReference type="InterPro" id="IPR045371">
    <property type="entry name" value="ADAMTS_CR_3"/>
</dbReference>
<dbReference type="InterPro" id="IPR010294">
    <property type="entry name" value="ADAMTS_spacer1"/>
</dbReference>
<dbReference type="InterPro" id="IPR024079">
    <property type="entry name" value="MetalloPept_cat_dom_sf"/>
</dbReference>
<dbReference type="InterPro" id="IPR001590">
    <property type="entry name" value="Peptidase_M12B"/>
</dbReference>
<dbReference type="InterPro" id="IPR002870">
    <property type="entry name" value="Peptidase_M12B_N"/>
</dbReference>
<dbReference type="InterPro" id="IPR010909">
    <property type="entry name" value="PLAC"/>
</dbReference>
<dbReference type="InterPro" id="IPR000884">
    <property type="entry name" value="TSP1_rpt"/>
</dbReference>
<dbReference type="InterPro" id="IPR036383">
    <property type="entry name" value="TSP1_rpt_sf"/>
</dbReference>
<dbReference type="PANTHER" id="PTHR13723:SF26">
    <property type="entry name" value="A DISINTEGRIN AND METALLOPROTEINASE WITH THROMBOSPONDIN MOTIFS 10"/>
    <property type="match status" value="1"/>
</dbReference>
<dbReference type="PANTHER" id="PTHR13723">
    <property type="entry name" value="ADAMTS A DISINTEGRIN AND METALLOPROTEASE WITH THROMBOSPONDIN MOTIFS PROTEASE"/>
    <property type="match status" value="1"/>
</dbReference>
<dbReference type="Pfam" id="PF17771">
    <property type="entry name" value="ADAMTS_CR_2"/>
    <property type="match status" value="1"/>
</dbReference>
<dbReference type="Pfam" id="PF19236">
    <property type="entry name" value="ADAMTS_CR_3"/>
    <property type="match status" value="1"/>
</dbReference>
<dbReference type="Pfam" id="PF05986">
    <property type="entry name" value="ADAMTS_spacer1"/>
    <property type="match status" value="1"/>
</dbReference>
<dbReference type="Pfam" id="PF01562">
    <property type="entry name" value="Pep_M12B_propep"/>
    <property type="match status" value="1"/>
</dbReference>
<dbReference type="Pfam" id="PF08686">
    <property type="entry name" value="PLAC"/>
    <property type="match status" value="1"/>
</dbReference>
<dbReference type="Pfam" id="PF01421">
    <property type="entry name" value="Reprolysin"/>
    <property type="match status" value="1"/>
</dbReference>
<dbReference type="Pfam" id="PF19030">
    <property type="entry name" value="TSP1_ADAMTS"/>
    <property type="match status" value="4"/>
</dbReference>
<dbReference type="Pfam" id="PF00090">
    <property type="entry name" value="TSP_1"/>
    <property type="match status" value="1"/>
</dbReference>
<dbReference type="PRINTS" id="PR01857">
    <property type="entry name" value="ADAMTSFAMILY"/>
</dbReference>
<dbReference type="SMART" id="SM00209">
    <property type="entry name" value="TSP1"/>
    <property type="match status" value="5"/>
</dbReference>
<dbReference type="SUPFAM" id="SSF55486">
    <property type="entry name" value="Metalloproteases ('zincins'), catalytic domain"/>
    <property type="match status" value="1"/>
</dbReference>
<dbReference type="SUPFAM" id="SSF82895">
    <property type="entry name" value="TSP-1 type 1 repeat"/>
    <property type="match status" value="5"/>
</dbReference>
<dbReference type="PROSITE" id="PS50215">
    <property type="entry name" value="ADAM_MEPRO"/>
    <property type="match status" value="1"/>
</dbReference>
<dbReference type="PROSITE" id="PS50900">
    <property type="entry name" value="PLAC"/>
    <property type="match status" value="1"/>
</dbReference>
<dbReference type="PROSITE" id="PS50092">
    <property type="entry name" value="TSP1"/>
    <property type="match status" value="5"/>
</dbReference>
<dbReference type="PROSITE" id="PS00142">
    <property type="entry name" value="ZINC_PROTEASE"/>
    <property type="match status" value="1"/>
</dbReference>
<reference key="1">
    <citation type="journal article" date="2004" name="Nature">
        <title>The DNA sequence and biology of human chromosome 19.</title>
        <authorList>
            <person name="Grimwood J."/>
            <person name="Gordon L.A."/>
            <person name="Olsen A.S."/>
            <person name="Terry A."/>
            <person name="Schmutz J."/>
            <person name="Lamerdin J.E."/>
            <person name="Hellsten U."/>
            <person name="Goodstein D."/>
            <person name="Couronne O."/>
            <person name="Tran-Gyamfi M."/>
            <person name="Aerts A."/>
            <person name="Altherr M."/>
            <person name="Ashworth L."/>
            <person name="Bajorek E."/>
            <person name="Black S."/>
            <person name="Branscomb E."/>
            <person name="Caenepeel S."/>
            <person name="Carrano A.V."/>
            <person name="Caoile C."/>
            <person name="Chan Y.M."/>
            <person name="Christensen M."/>
            <person name="Cleland C.A."/>
            <person name="Copeland A."/>
            <person name="Dalin E."/>
            <person name="Dehal P."/>
            <person name="Denys M."/>
            <person name="Detter J.C."/>
            <person name="Escobar J."/>
            <person name="Flowers D."/>
            <person name="Fotopulos D."/>
            <person name="Garcia C."/>
            <person name="Georgescu A.M."/>
            <person name="Glavina T."/>
            <person name="Gomez M."/>
            <person name="Gonzales E."/>
            <person name="Groza M."/>
            <person name="Hammon N."/>
            <person name="Hawkins T."/>
            <person name="Haydu L."/>
            <person name="Ho I."/>
            <person name="Huang W."/>
            <person name="Israni S."/>
            <person name="Jett J."/>
            <person name="Kadner K."/>
            <person name="Kimball H."/>
            <person name="Kobayashi A."/>
            <person name="Larionov V."/>
            <person name="Leem S.-H."/>
            <person name="Lopez F."/>
            <person name="Lou Y."/>
            <person name="Lowry S."/>
            <person name="Malfatti S."/>
            <person name="Martinez D."/>
            <person name="McCready P.M."/>
            <person name="Medina C."/>
            <person name="Morgan J."/>
            <person name="Nelson K."/>
            <person name="Nolan M."/>
            <person name="Ovcharenko I."/>
            <person name="Pitluck S."/>
            <person name="Pollard M."/>
            <person name="Popkie A.P."/>
            <person name="Predki P."/>
            <person name="Quan G."/>
            <person name="Ramirez L."/>
            <person name="Rash S."/>
            <person name="Retterer J."/>
            <person name="Rodriguez A."/>
            <person name="Rogers S."/>
            <person name="Salamov A."/>
            <person name="Salazar A."/>
            <person name="She X."/>
            <person name="Smith D."/>
            <person name="Slezak T."/>
            <person name="Solovyev V."/>
            <person name="Thayer N."/>
            <person name="Tice H."/>
            <person name="Tsai M."/>
            <person name="Ustaszewska A."/>
            <person name="Vo N."/>
            <person name="Wagner M."/>
            <person name="Wheeler J."/>
            <person name="Wu K."/>
            <person name="Xie G."/>
            <person name="Yang J."/>
            <person name="Dubchak I."/>
            <person name="Furey T.S."/>
            <person name="DeJong P."/>
            <person name="Dickson M."/>
            <person name="Gordon D."/>
            <person name="Eichler E.E."/>
            <person name="Pennacchio L.A."/>
            <person name="Richardson P."/>
            <person name="Stubbs L."/>
            <person name="Rokhsar D.S."/>
            <person name="Myers R.M."/>
            <person name="Rubin E.M."/>
            <person name="Lucas S.M."/>
        </authorList>
    </citation>
    <scope>NUCLEOTIDE SEQUENCE [LARGE SCALE GENOMIC DNA]</scope>
</reference>
<reference key="2">
    <citation type="journal article" date="2004" name="J. Biol. Chem.">
        <title>Discovery and characterization of a novel, widely expressed metalloprotease, ADAMTS10, and its proteolytic activation.</title>
        <authorList>
            <person name="Somerville R.P.T."/>
            <person name="Jungers K.A."/>
            <person name="Apte S.S."/>
        </authorList>
    </citation>
    <scope>NUCLEOTIDE SEQUENCE [MRNA] OF 27-1103 (ISOFORM 1)</scope>
    <scope>TISSUE SPECIFICITY</scope>
    <scope>VARIANT SER-134</scope>
</reference>
<reference key="3">
    <citation type="journal article" date="2004" name="Am. J. Hum. Genet.">
        <title>ADAMTS10 mutations in autosomal recessive Weill-Marchesani syndrome.</title>
        <authorList>
            <person name="Dagoneau N."/>
            <person name="Benoist-Lasselin C."/>
            <person name="Huber C."/>
            <person name="Faivre L."/>
            <person name="Megarbane A."/>
            <person name="Alswaid A."/>
            <person name="Dollfus H."/>
            <person name="Alembik Y."/>
            <person name="Munnich A."/>
            <person name="Legeai-Mallet L."/>
            <person name="Cormier-Daire V."/>
        </authorList>
    </citation>
    <scope>INVOLVEMENT IN WMS1</scope>
</reference>
<reference key="4">
    <citation type="journal article" date="2011" name="J. Biol. Chem.">
        <title>ADAMTS10 protein interacts with fibrillin-1 and promotes its deposition in extracellular matrix of cultured fibroblasts.</title>
        <authorList>
            <person name="Kutz W.E."/>
            <person name="Wang L.W."/>
            <person name="Bader H.L."/>
            <person name="Majors A.K."/>
            <person name="Iwata K."/>
            <person name="Traboulsi E.I."/>
            <person name="Sakai L.Y."/>
            <person name="Keene D.R."/>
            <person name="Apte S.S."/>
        </authorList>
    </citation>
    <scope>FUNCTION</scope>
    <scope>SUBCELLULAR LOCATION</scope>
    <scope>INTERACTION WITH FBN1</scope>
</reference>
<reference key="5">
    <citation type="journal article" date="2008" name="Hum. Mutat.">
        <title>Functional analysis of an ADAMTS10 signal peptide mutation in Weill-Marchesani syndrome demonstrates a long-range effect on secretion of the full-length enzyme.</title>
        <authorList>
            <person name="Kutz W.E."/>
            <person name="Wang L.W."/>
            <person name="Dagoneau N."/>
            <person name="Odrcic K.J."/>
            <person name="Cormier-Daire V."/>
            <person name="Traboulsi E.I."/>
            <person name="Apte S.S."/>
        </authorList>
    </citation>
    <scope>VARIANT WMS1 THR-25</scope>
    <scope>CHARACTERIZATION OF VARIANT WMS1 THR-25</scope>
</reference>
<sequence length="1103" mass="120874">MAPACQILRWALALGLGLMFEVTHAFRSQDEFLSSLESYEIAFPTRVDHNGALLAFSPPPPRRQRRGTGATAESRLFYKVASPSTHFLLNLTRSSRLLAGHVSVEYWTREGLAWQRAARPHCLYAGHLQGQASTSHVAISTCGGLHGLIVADEEEYLIEPLHGGPKGSRSPEESGPHVVYKRSSLRHPHLDTACGVRDEKPWKGRPWWLRTLKPPPARPLGNETERGQPGLKRSVSRERYVETLVVADKMMVAYHGRRDVEQYVLAIMNIVAKLFQDSSLGSTVNILVTRLILLTEDQPTLEITHHAGKSLDSFCKWQKSIVNHSGHGNAIPENGVANHDTAVLITRYDICIYKNKPCGTLGLAPVGGMCERERSCSVNEDIGLATAFTIAHEIGHTFGMNHDGVGNSCGARGQDPAKLMAAHITMKTNPFVWSSCSRDYITSFLDSGLGLCLNNRPPRQDFVYPTVAPGQAYDADEQCRFQHGVKSRQCKYGEVCSELWCLSKSNRCITNSIPAAEGTLCQTHTIDKGWCYKRVCVPFGSRPEGVDGAWGPWTPWGDCSRTCGGGVSSSSRHCDSPRPTIGGKYCLGERRRHRSCNTDDCPPGSQDFREVQCSEFDSIPFRGKFYKWKTYRGGGVKACSLTCLAEGFNFYTERAAAVVDGTPCRPDTVDICVSGECKHVGCDRVLGSDLREDKCRVCGGDGSACETIEGVFSPASPGAGYEDVVWIPKGSVHIFIQDLNLSLSHLALKGDQESLLLEGLPGTPQPHRLPLAGTTFQLRQGPDQVQSLEALGPINASLIVMVLARTELPALRYRFNAPIARDSLPPYSWHYAPWTKCSAQCAGGSQVQAVECRNQLDSSAVAPHYCSAHSKLPKRQRACNTEPCPPDWVVGNWSLCSRSCDAGVRSRSVVCQRRVSAAEEKALDDSACPQPRPPVLEACHGPTCPPEWAALDWSECTPSCGPGLRHRVVLCKSADHRATLPPAHCSPAAKPPATMRCNLRRCPPARWVAGEWGECSAQCGVGQRQRSVRCTSHTGQASHECTEALRPPTTQQCEAKCDSPTPGDGPEECKDVNKVAYCPLVLKFQFCSRAYFRQMCCKTCHGH</sequence>
<organism>
    <name type="scientific">Homo sapiens</name>
    <name type="common">Human</name>
    <dbReference type="NCBI Taxonomy" id="9606"/>
    <lineage>
        <taxon>Eukaryota</taxon>
        <taxon>Metazoa</taxon>
        <taxon>Chordata</taxon>
        <taxon>Craniata</taxon>
        <taxon>Vertebrata</taxon>
        <taxon>Euteleostomi</taxon>
        <taxon>Mammalia</taxon>
        <taxon>Eutheria</taxon>
        <taxon>Euarchontoglires</taxon>
        <taxon>Primates</taxon>
        <taxon>Haplorrhini</taxon>
        <taxon>Catarrhini</taxon>
        <taxon>Hominidae</taxon>
        <taxon>Homo</taxon>
    </lineage>
</organism>
<keyword id="KW-0025">Alternative splicing</keyword>
<keyword id="KW-0165">Cleavage on pair of basic residues</keyword>
<keyword id="KW-0225">Disease variant</keyword>
<keyword id="KW-1015">Disulfide bond</keyword>
<keyword id="KW-0242">Dwarfism</keyword>
<keyword id="KW-0272">Extracellular matrix</keyword>
<keyword id="KW-0325">Glycoprotein</keyword>
<keyword id="KW-0378">Hydrolase</keyword>
<keyword id="KW-0479">Metal-binding</keyword>
<keyword id="KW-0482">Metalloprotease</keyword>
<keyword id="KW-0645">Protease</keyword>
<keyword id="KW-1185">Reference proteome</keyword>
<keyword id="KW-0677">Repeat</keyword>
<keyword id="KW-0964">Secreted</keyword>
<keyword id="KW-0732">Signal</keyword>
<keyword id="KW-0862">Zinc</keyword>
<keyword id="KW-0865">Zymogen</keyword>
<protein>
    <recommendedName>
        <fullName>A disintegrin and metalloproteinase with thrombospondin motifs 10</fullName>
        <shortName>ADAM-TS 10</shortName>
        <shortName>ADAM-TS10</shortName>
        <shortName>ADAMTS-10</shortName>
        <ecNumber>3.4.24.-</ecNumber>
    </recommendedName>
</protein>
<feature type="signal peptide" evidence="2">
    <location>
        <begin position="1"/>
        <end position="25"/>
    </location>
</feature>
<feature type="propeptide" id="PRO_0000029184" evidence="1">
    <location>
        <begin position="26"/>
        <end position="233"/>
    </location>
</feature>
<feature type="chain" id="PRO_0000029185" description="A disintegrin and metalloproteinase with thrombospondin motifs 10">
    <location>
        <begin position="234"/>
        <end position="1103"/>
    </location>
</feature>
<feature type="domain" description="Peptidase M12B" evidence="5">
    <location>
        <begin position="239"/>
        <end position="457"/>
    </location>
</feature>
<feature type="domain" description="Disintegrin">
    <location>
        <begin position="460"/>
        <end position="546"/>
    </location>
</feature>
<feature type="domain" description="TSP type-1 1" evidence="3">
    <location>
        <begin position="547"/>
        <end position="602"/>
    </location>
</feature>
<feature type="domain" description="TSP type-1 2" evidence="3">
    <location>
        <begin position="825"/>
        <end position="883"/>
    </location>
</feature>
<feature type="domain" description="TSP type-1 3" evidence="3">
    <location>
        <begin position="884"/>
        <end position="945"/>
    </location>
</feature>
<feature type="domain" description="TSP type-1 4" evidence="3">
    <location>
        <begin position="947"/>
        <end position="1001"/>
    </location>
</feature>
<feature type="domain" description="TSP type-1 5" evidence="3">
    <location>
        <begin position="1003"/>
        <end position="1058"/>
    </location>
</feature>
<feature type="domain" description="PLAC" evidence="4">
    <location>
        <begin position="1065"/>
        <end position="1103"/>
    </location>
</feature>
<feature type="region of interest" description="Disordered" evidence="7">
    <location>
        <begin position="213"/>
        <end position="233"/>
    </location>
</feature>
<feature type="region of interest" description="Spacer">
    <location>
        <begin position="706"/>
        <end position="828"/>
    </location>
</feature>
<feature type="active site" evidence="5 6">
    <location>
        <position position="393"/>
    </location>
</feature>
<feature type="binding site" evidence="1">
    <location>
        <position position="392"/>
    </location>
    <ligand>
        <name>Zn(2+)</name>
        <dbReference type="ChEBI" id="CHEBI:29105"/>
        <note>catalytic</note>
    </ligand>
</feature>
<feature type="binding site" evidence="1">
    <location>
        <position position="396"/>
    </location>
    <ligand>
        <name>Zn(2+)</name>
        <dbReference type="ChEBI" id="CHEBI:29105"/>
        <note>catalytic</note>
    </ligand>
</feature>
<feature type="binding site" evidence="1">
    <location>
        <position position="402"/>
    </location>
    <ligand>
        <name>Zn(2+)</name>
        <dbReference type="ChEBI" id="CHEBI:29105"/>
        <note>catalytic</note>
    </ligand>
</feature>
<feature type="glycosylation site" description="N-linked (GlcNAc...) asparagine" evidence="2">
    <location>
        <position position="90"/>
    </location>
</feature>
<feature type="glycosylation site" description="N-linked (GlcNAc...) asparagine" evidence="2">
    <location>
        <position position="222"/>
    </location>
</feature>
<feature type="glycosylation site" description="N-linked (GlcNAc...) asparagine" evidence="2">
    <location>
        <position position="323"/>
    </location>
</feature>
<feature type="glycosylation site" description="N-linked (GlcNAc...) asparagine" evidence="2">
    <location>
        <position position="740"/>
    </location>
</feature>
<feature type="glycosylation site" description="N-linked (GlcNAc...) asparagine" evidence="2">
    <location>
        <position position="795"/>
    </location>
</feature>
<feature type="glycosylation site" description="N-linked (GlcNAc...) asparagine" evidence="2">
    <location>
        <position position="892"/>
    </location>
</feature>
<feature type="disulfide bond" evidence="1">
    <location>
        <begin position="315"/>
        <end position="376"/>
    </location>
</feature>
<feature type="disulfide bond" evidence="1">
    <location>
        <begin position="351"/>
        <end position="358"/>
    </location>
</feature>
<feature type="disulfide bond" evidence="1">
    <location>
        <begin position="370"/>
        <end position="452"/>
    </location>
</feature>
<feature type="disulfide bond" evidence="1">
    <location>
        <begin position="409"/>
        <end position="436"/>
    </location>
</feature>
<feature type="disulfide bond" evidence="1">
    <location>
        <begin position="479"/>
        <end position="501"/>
    </location>
</feature>
<feature type="disulfide bond" evidence="1">
    <location>
        <begin position="490"/>
        <end position="508"/>
    </location>
</feature>
<feature type="disulfide bond" evidence="1">
    <location>
        <begin position="496"/>
        <end position="531"/>
    </location>
</feature>
<feature type="disulfide bond" evidence="1">
    <location>
        <begin position="521"/>
        <end position="536"/>
    </location>
</feature>
<feature type="disulfide bond" evidence="1">
    <location>
        <begin position="559"/>
        <end position="596"/>
    </location>
</feature>
<feature type="disulfide bond" evidence="1">
    <location>
        <begin position="563"/>
        <end position="601"/>
    </location>
</feature>
<feature type="disulfide bond" evidence="1">
    <location>
        <begin position="574"/>
        <end position="586"/>
    </location>
</feature>
<feature type="splice variant" id="VSP_054707" description="In isoform 2." evidence="12">
    <original>MAPACQILRWALALGLGLMFEVTHAFRSQDEFLSSLESYEIAFPTRVDHNGALLAFSPPPPRRQRRGTGATAESRLFYKVASPSTHFLLNLTRSSRLLAGHVSVEYWTREGLAWQRAARPHCLYAGHLQGQASTSHVAISTCGGLHGLIVADEEEYLIEPLHGGPKGSRSPEESGPHVVYKRSSLRHPHLDTACGVRDEKPWKGRPWWLRTLKPPPARPLGNETERGQPGLKRSVSRERYVETLVVADKMMVAYHGRRDVEQYVLAIMNIVAKLFQDSSLGSTVNILVTRLILLTEDQPTLEITHHAGKSLDSFCKWQKSIVNHSGHGNAIPENGVANHDTAVLITRYDICIYKNKPCGTLGLAPVGGMCERERSCSVNEDIGLATAFTIAHEIGHTFGMNHDGVGNSCGARGQDPAKLMAAHITMKTNPFVWSSCSRDYITSFLDSGLGLCLNNRPPRQDFVYPTVAPGQAYDADEQCRFQHGVKSRQCKYGEVCSELWCLSKSNRCITNSIPAAEGTLCQTHTIDKGWCYKRVCVPFGSRPEGVDGAWGPWTPWGDCSRTCGGGVSSSSRHCDSPRPTIGGKYCLGERRRHRSCNTDDCPPGSQDFREVQCSEFDSIPFRGKFYKWKTYRGGGVK</original>
    <variation>MGPTSVLRAGLTPSCLPPPSGATNGSVSPLGRAQRVWTEPGGRGLHGATAAGPVAAACPLLAVTATAPGQPSGASTVWVREGGTAPATRMTVPLAPRTSEKCSVLNLTASLSVGNSTSGKRTGE</variation>
    <location>
        <begin position="1"/>
        <end position="637"/>
    </location>
</feature>
<feature type="sequence variant" id="VAR_054439" description="In WMS1; shows consistent and significantly diminished protein secretion." evidence="10">
    <original>A</original>
    <variation>T</variation>
    <location>
        <position position="25"/>
    </location>
</feature>
<feature type="sequence variant" id="VAR_054440" description="In dbSNP:rs3814291.">
    <original>R</original>
    <variation>Q</variation>
    <location>
        <position position="119"/>
    </location>
</feature>
<feature type="sequence variant" id="VAR_054441" description="In dbSNP:rs7255721." evidence="8">
    <original>T</original>
    <variation>S</variation>
    <location>
        <position position="134"/>
    </location>
</feature>
<feature type="sequence conflict" description="In Ref. 2; AAG35563." evidence="12" ref="2">
    <original>AT</original>
    <variation>PQ</variation>
    <location>
        <begin position="385"/>
        <end position="386"/>
    </location>
</feature>
<feature type="sequence conflict" description="In Ref. 2; AAG35563." evidence="12" ref="2">
    <original>S</original>
    <variation>N</variation>
    <location>
        <position position="437"/>
    </location>
</feature>
<feature type="sequence conflict" description="In Ref. 2; AAG35563." evidence="12" ref="2">
    <original>C</original>
    <variation>S</variation>
    <location>
        <position position="643"/>
    </location>
</feature>
<feature type="sequence conflict" description="In Ref. 2; AAG35563." evidence="12" ref="2">
    <original>H</original>
    <variation>Q</variation>
    <location>
        <position position="1101"/>
    </location>
</feature>
<name>ATS10_HUMAN</name>